<dbReference type="EC" id="6.1.1.16" evidence="3"/>
<dbReference type="EMBL" id="BC046746">
    <property type="protein sequence ID" value="AAH46746.1"/>
    <property type="molecule type" value="mRNA"/>
</dbReference>
<dbReference type="RefSeq" id="NP_001080786.1">
    <property type="nucleotide sequence ID" value="NM_001087317.1"/>
</dbReference>
<dbReference type="SMR" id="Q7ZWR2"/>
<dbReference type="DNASU" id="380479"/>
<dbReference type="GeneID" id="380479"/>
<dbReference type="KEGG" id="xla:380479"/>
<dbReference type="AGR" id="Xenbase:XB-GENE-5825997"/>
<dbReference type="CTD" id="380479"/>
<dbReference type="Xenbase" id="XB-GENE-5825997">
    <property type="gene designation" value="cars1.S"/>
</dbReference>
<dbReference type="OMA" id="FHNDMKS"/>
<dbReference type="OrthoDB" id="438179at2759"/>
<dbReference type="CD-CODE" id="78E86D56">
    <property type="entry name" value="Mitochondrial cloud"/>
</dbReference>
<dbReference type="Proteomes" id="UP000186698">
    <property type="component" value="Chromosome 4S"/>
</dbReference>
<dbReference type="Bgee" id="380479">
    <property type="expression patterns" value="Expressed in stomach and 19 other cell types or tissues"/>
</dbReference>
<dbReference type="GO" id="GO:0005737">
    <property type="term" value="C:cytoplasm"/>
    <property type="evidence" value="ECO:0000250"/>
    <property type="project" value="UniProtKB"/>
</dbReference>
<dbReference type="GO" id="GO:0005524">
    <property type="term" value="F:ATP binding"/>
    <property type="evidence" value="ECO:0000318"/>
    <property type="project" value="GO_Central"/>
</dbReference>
<dbReference type="GO" id="GO:0004817">
    <property type="term" value="F:cysteine-tRNA ligase activity"/>
    <property type="evidence" value="ECO:0000250"/>
    <property type="project" value="UniProtKB"/>
</dbReference>
<dbReference type="GO" id="GO:0046872">
    <property type="term" value="F:metal ion binding"/>
    <property type="evidence" value="ECO:0007669"/>
    <property type="project" value="UniProtKB-KW"/>
</dbReference>
<dbReference type="GO" id="GO:0000049">
    <property type="term" value="F:tRNA binding"/>
    <property type="evidence" value="ECO:0000250"/>
    <property type="project" value="UniProtKB"/>
</dbReference>
<dbReference type="GO" id="GO:0006423">
    <property type="term" value="P:cysteinyl-tRNA aminoacylation"/>
    <property type="evidence" value="ECO:0000250"/>
    <property type="project" value="UniProtKB"/>
</dbReference>
<dbReference type="CDD" id="cd00672">
    <property type="entry name" value="CysRS_core"/>
    <property type="match status" value="1"/>
</dbReference>
<dbReference type="FunFam" id="3.40.50.620:FF:000027">
    <property type="entry name" value="Cysteine--tRNA ligase, cytoplasmic"/>
    <property type="match status" value="1"/>
</dbReference>
<dbReference type="FunFam" id="3.40.50.620:FF:000228">
    <property type="entry name" value="Cysteinyl-tRNA synthetase"/>
    <property type="match status" value="1"/>
</dbReference>
<dbReference type="Gene3D" id="3.40.50.620">
    <property type="entry name" value="HUPs"/>
    <property type="match status" value="1"/>
</dbReference>
<dbReference type="HAMAP" id="MF_00041">
    <property type="entry name" value="Cys_tRNA_synth"/>
    <property type="match status" value="1"/>
</dbReference>
<dbReference type="InterPro" id="IPR015803">
    <property type="entry name" value="Cys-tRNA-ligase"/>
</dbReference>
<dbReference type="InterPro" id="IPR024909">
    <property type="entry name" value="Cys-tRNA/MSH_ligase"/>
</dbReference>
<dbReference type="InterPro" id="IPR014729">
    <property type="entry name" value="Rossmann-like_a/b/a_fold"/>
</dbReference>
<dbReference type="InterPro" id="IPR032678">
    <property type="entry name" value="tRNA-synt_1_cat_dom"/>
</dbReference>
<dbReference type="InterPro" id="IPR009080">
    <property type="entry name" value="tRNAsynth_Ia_anticodon-bd"/>
</dbReference>
<dbReference type="NCBIfam" id="TIGR00435">
    <property type="entry name" value="cysS"/>
    <property type="match status" value="1"/>
</dbReference>
<dbReference type="PANTHER" id="PTHR10890:SF3">
    <property type="entry name" value="CYSTEINE--TRNA LIGASE, CYTOPLASMIC"/>
    <property type="match status" value="1"/>
</dbReference>
<dbReference type="PANTHER" id="PTHR10890">
    <property type="entry name" value="CYSTEINYL-TRNA SYNTHETASE"/>
    <property type="match status" value="1"/>
</dbReference>
<dbReference type="Pfam" id="PF01406">
    <property type="entry name" value="tRNA-synt_1e"/>
    <property type="match status" value="1"/>
</dbReference>
<dbReference type="PRINTS" id="PR00983">
    <property type="entry name" value="TRNASYNTHCYS"/>
</dbReference>
<dbReference type="SUPFAM" id="SSF47323">
    <property type="entry name" value="Anticodon-binding domain of a subclass of class I aminoacyl-tRNA synthetases"/>
    <property type="match status" value="1"/>
</dbReference>
<dbReference type="SUPFAM" id="SSF52374">
    <property type="entry name" value="Nucleotidylyl transferase"/>
    <property type="match status" value="1"/>
</dbReference>
<gene>
    <name type="primary">cars1</name>
    <name type="synonym">cars</name>
</gene>
<sequence>MTESWEQGKGRRTQPPWSAPNTNEQPGLRLYNSLTRSKELFFPQVGRKVTWYCCGPTVYDASHMGHARSYISFDILRRVLRDYFKYDVFYCMNITDIDDKIIKRARQRHLFQQYRESNPPHSDLLQDVNTALIPFLQRISETNDPDKKQMLERIQTAVSAALLPLQDALNKNTGAEELQKHSQVLMEAAVDLLSDWLDEKHGAQIADNSIFSQLPKYWEGEYHKDMEALNVLTPDVLTRVSEYVPEIVAFVQKIVDNGYGYVSNGSVYFSTAKFHDSENHFYAKLVPEAVGDQKALQEGEGDLSISADRLSEKQSPNDFALWKASKPGEPSWESPWGKGRPGWHIECSAMAGSILGESMDIHGGGFDLRFPHHDNELAQSEAYFDNDHWVRYFLHTGHLTIAGCKMSKSLKNFITIKDALQKNTARQLRLAFLMHSWKDTLDYSNNTMESAVQYEKFMNEFFLNVKDLLRAPTDITGQFVKWEVLEIELNNCFYSKKAAIHEALCDNIDTRTVMEEMRSLVSQCNSYIASKKVAKQFPNRMLLRSISSYLTSMLKVFGAIEGEEVIGFPIGGSENSMNLESTVMPYLQVLSQFREGVRQIARQHKVTEVLQLSDLLRDDILPELGVRLEDHEGLPTVVKLVDRETLLKEKEEKRKAEEEKQRKKEEAARKKQQQEAAKLEKMKISPSQMFTLETDKYSQFDESGFPTHDTEGKELSKGQTKKLRKLFEVQEKLHKEYLQMVQNGTTA</sequence>
<reference key="1">
    <citation type="submission" date="2003-02" db="EMBL/GenBank/DDBJ databases">
        <authorList>
            <consortium name="NIH - Xenopus Gene Collection (XGC) project"/>
        </authorList>
    </citation>
    <scope>NUCLEOTIDE SEQUENCE [LARGE SCALE MRNA]</scope>
    <source>
        <tissue>Embryo</tissue>
    </source>
</reference>
<proteinExistence type="evidence at transcript level"/>
<organism>
    <name type="scientific">Xenopus laevis</name>
    <name type="common">African clawed frog</name>
    <dbReference type="NCBI Taxonomy" id="8355"/>
    <lineage>
        <taxon>Eukaryota</taxon>
        <taxon>Metazoa</taxon>
        <taxon>Chordata</taxon>
        <taxon>Craniata</taxon>
        <taxon>Vertebrata</taxon>
        <taxon>Euteleostomi</taxon>
        <taxon>Amphibia</taxon>
        <taxon>Batrachia</taxon>
        <taxon>Anura</taxon>
        <taxon>Pipoidea</taxon>
        <taxon>Pipidae</taxon>
        <taxon>Xenopodinae</taxon>
        <taxon>Xenopus</taxon>
        <taxon>Xenopus</taxon>
    </lineage>
</organism>
<protein>
    <recommendedName>
        <fullName>Cysteine--tRNA ligase, cytoplasmic</fullName>
        <ecNumber evidence="3">6.1.1.16</ecNumber>
    </recommendedName>
    <alternativeName>
        <fullName>Cysteinyl-tRNA synthetase</fullName>
        <shortName>CysRS</shortName>
    </alternativeName>
</protein>
<evidence type="ECO:0000250" key="1"/>
<evidence type="ECO:0000250" key="2">
    <source>
        <dbReference type="UniProtKB" id="P21888"/>
    </source>
</evidence>
<evidence type="ECO:0000250" key="3">
    <source>
        <dbReference type="UniProtKB" id="P49589"/>
    </source>
</evidence>
<evidence type="ECO:0000256" key="4">
    <source>
        <dbReference type="SAM" id="MobiDB-lite"/>
    </source>
</evidence>
<evidence type="ECO:0000305" key="5"/>
<name>SYCC_XENLA</name>
<comment type="function">
    <text evidence="3">Catalyzes the ATP-dependent ligation of cysteine to tRNA(Cys).</text>
</comment>
<comment type="catalytic activity">
    <reaction evidence="3">
        <text>tRNA(Cys) + L-cysteine + ATP = L-cysteinyl-tRNA(Cys) + AMP + diphosphate</text>
        <dbReference type="Rhea" id="RHEA:17773"/>
        <dbReference type="Rhea" id="RHEA-COMP:9661"/>
        <dbReference type="Rhea" id="RHEA-COMP:9679"/>
        <dbReference type="ChEBI" id="CHEBI:30616"/>
        <dbReference type="ChEBI" id="CHEBI:33019"/>
        <dbReference type="ChEBI" id="CHEBI:35235"/>
        <dbReference type="ChEBI" id="CHEBI:78442"/>
        <dbReference type="ChEBI" id="CHEBI:78517"/>
        <dbReference type="ChEBI" id="CHEBI:456215"/>
        <dbReference type="EC" id="6.1.1.16"/>
    </reaction>
    <physiologicalReaction direction="left-to-right" evidence="3">
        <dbReference type="Rhea" id="RHEA:17774"/>
    </physiologicalReaction>
</comment>
<comment type="cofactor">
    <cofactor evidence="2">
        <name>Zn(2+)</name>
        <dbReference type="ChEBI" id="CHEBI:29105"/>
    </cofactor>
    <text evidence="2">Binds 1 zinc ion per subunit.</text>
</comment>
<comment type="subunit">
    <text evidence="3">Homodimer.</text>
</comment>
<comment type="subcellular location">
    <subcellularLocation>
        <location evidence="3">Cytoplasm</location>
    </subcellularLocation>
</comment>
<comment type="similarity">
    <text evidence="5">Belongs to the class-I aminoacyl-tRNA synthetase family.</text>
</comment>
<accession>Q7ZWR2</accession>
<keyword id="KW-0030">Aminoacyl-tRNA synthetase</keyword>
<keyword id="KW-0067">ATP-binding</keyword>
<keyword id="KW-0963">Cytoplasm</keyword>
<keyword id="KW-0436">Ligase</keyword>
<keyword id="KW-0479">Metal-binding</keyword>
<keyword id="KW-0547">Nucleotide-binding</keyword>
<keyword id="KW-0648">Protein biosynthesis</keyword>
<keyword id="KW-1185">Reference proteome</keyword>
<keyword id="KW-0862">Zinc</keyword>
<feature type="chain" id="PRO_0000250746" description="Cysteine--tRNA ligase, cytoplasmic">
    <location>
        <begin position="1"/>
        <end position="747"/>
    </location>
</feature>
<feature type="region of interest" description="Disordered" evidence="4">
    <location>
        <begin position="1"/>
        <end position="26"/>
    </location>
</feature>
<feature type="region of interest" description="Disordered" evidence="4">
    <location>
        <begin position="651"/>
        <end position="685"/>
    </location>
</feature>
<feature type="region of interest" description="Disordered" evidence="4">
    <location>
        <begin position="700"/>
        <end position="721"/>
    </location>
</feature>
<feature type="short sequence motif" description="'HIGH' region">
    <location>
        <begin position="56"/>
        <end position="66"/>
    </location>
</feature>
<feature type="short sequence motif" description="'KIIK' region">
    <location>
        <begin position="100"/>
        <end position="103"/>
    </location>
</feature>
<feature type="short sequence motif" description="'KMSKS' region">
    <location>
        <begin position="405"/>
        <end position="409"/>
    </location>
</feature>
<feature type="compositionally biased region" description="Polar residues" evidence="4">
    <location>
        <begin position="15"/>
        <end position="25"/>
    </location>
</feature>
<feature type="compositionally biased region" description="Basic and acidic residues" evidence="4">
    <location>
        <begin position="651"/>
        <end position="683"/>
    </location>
</feature>
<feature type="binding site" evidence="2">
    <location>
        <position position="54"/>
    </location>
    <ligand>
        <name>Zn(2+)</name>
        <dbReference type="ChEBI" id="CHEBI:29105"/>
    </ligand>
</feature>
<feature type="binding site" evidence="2">
    <location>
        <position position="55"/>
    </location>
    <ligand>
        <name>L-cysteine</name>
        <dbReference type="ChEBI" id="CHEBI:35235"/>
    </ligand>
</feature>
<feature type="binding site" evidence="2">
    <location>
        <position position="95"/>
    </location>
    <ligand>
        <name>L-cysteine</name>
        <dbReference type="ChEBI" id="CHEBI:35235"/>
    </ligand>
</feature>
<feature type="binding site" evidence="2">
    <location>
        <position position="347"/>
    </location>
    <ligand>
        <name>Zn(2+)</name>
        <dbReference type="ChEBI" id="CHEBI:29105"/>
    </ligand>
</feature>
<feature type="binding site" evidence="2">
    <location>
        <position position="372"/>
    </location>
    <ligand>
        <name>L-cysteine</name>
        <dbReference type="ChEBI" id="CHEBI:35235"/>
    </ligand>
</feature>
<feature type="binding site" evidence="2">
    <location>
        <position position="372"/>
    </location>
    <ligand>
        <name>Zn(2+)</name>
        <dbReference type="ChEBI" id="CHEBI:29105"/>
    </ligand>
</feature>
<feature type="binding site" evidence="2">
    <location>
        <position position="376"/>
    </location>
    <ligand>
        <name>Zn(2+)</name>
        <dbReference type="ChEBI" id="CHEBI:29105"/>
    </ligand>
</feature>
<feature type="binding site" evidence="1">
    <location>
        <position position="408"/>
    </location>
    <ligand>
        <name>ATP</name>
        <dbReference type="ChEBI" id="CHEBI:30616"/>
    </ligand>
</feature>